<name>SYM_BORDL</name>
<dbReference type="EC" id="6.1.1.10" evidence="1"/>
<dbReference type="EMBL" id="CP000976">
    <property type="protein sequence ID" value="ACH93526.1"/>
    <property type="molecule type" value="Genomic_DNA"/>
</dbReference>
<dbReference type="SMR" id="B5RME0"/>
<dbReference type="STRING" id="412419.BDU_589"/>
<dbReference type="KEGG" id="bdu:BDU_589"/>
<dbReference type="eggNOG" id="COG0073">
    <property type="taxonomic scope" value="Bacteria"/>
</dbReference>
<dbReference type="eggNOG" id="COG0143">
    <property type="taxonomic scope" value="Bacteria"/>
</dbReference>
<dbReference type="HOGENOM" id="CLU_009710_1_0_12"/>
<dbReference type="Proteomes" id="UP000000611">
    <property type="component" value="Chromosome"/>
</dbReference>
<dbReference type="GO" id="GO:0017101">
    <property type="term" value="C:aminoacyl-tRNA synthetase multienzyme complex"/>
    <property type="evidence" value="ECO:0007669"/>
    <property type="project" value="TreeGrafter"/>
</dbReference>
<dbReference type="GO" id="GO:0005829">
    <property type="term" value="C:cytosol"/>
    <property type="evidence" value="ECO:0007669"/>
    <property type="project" value="TreeGrafter"/>
</dbReference>
<dbReference type="GO" id="GO:0005524">
    <property type="term" value="F:ATP binding"/>
    <property type="evidence" value="ECO:0007669"/>
    <property type="project" value="UniProtKB-UniRule"/>
</dbReference>
<dbReference type="GO" id="GO:0046872">
    <property type="term" value="F:metal ion binding"/>
    <property type="evidence" value="ECO:0007669"/>
    <property type="project" value="UniProtKB-KW"/>
</dbReference>
<dbReference type="GO" id="GO:0004825">
    <property type="term" value="F:methionine-tRNA ligase activity"/>
    <property type="evidence" value="ECO:0007669"/>
    <property type="project" value="UniProtKB-UniRule"/>
</dbReference>
<dbReference type="GO" id="GO:0000049">
    <property type="term" value="F:tRNA binding"/>
    <property type="evidence" value="ECO:0007669"/>
    <property type="project" value="UniProtKB-KW"/>
</dbReference>
<dbReference type="GO" id="GO:0006431">
    <property type="term" value="P:methionyl-tRNA aminoacylation"/>
    <property type="evidence" value="ECO:0007669"/>
    <property type="project" value="UniProtKB-UniRule"/>
</dbReference>
<dbReference type="CDD" id="cd07957">
    <property type="entry name" value="Anticodon_Ia_Met"/>
    <property type="match status" value="1"/>
</dbReference>
<dbReference type="CDD" id="cd00814">
    <property type="entry name" value="MetRS_core"/>
    <property type="match status" value="1"/>
</dbReference>
<dbReference type="CDD" id="cd02153">
    <property type="entry name" value="tRNA_bindingDomain"/>
    <property type="match status" value="1"/>
</dbReference>
<dbReference type="Gene3D" id="3.40.50.620">
    <property type="entry name" value="HUPs"/>
    <property type="match status" value="1"/>
</dbReference>
<dbReference type="Gene3D" id="1.10.730.10">
    <property type="entry name" value="Isoleucyl-tRNA Synthetase, Domain 1"/>
    <property type="match status" value="1"/>
</dbReference>
<dbReference type="Gene3D" id="2.20.28.20">
    <property type="entry name" value="Methionyl-tRNA synthetase, Zn-domain"/>
    <property type="match status" value="1"/>
</dbReference>
<dbReference type="Gene3D" id="2.40.50.140">
    <property type="entry name" value="Nucleic acid-binding proteins"/>
    <property type="match status" value="1"/>
</dbReference>
<dbReference type="HAMAP" id="MF_00098">
    <property type="entry name" value="Met_tRNA_synth_type1"/>
    <property type="match status" value="1"/>
</dbReference>
<dbReference type="InterPro" id="IPR001412">
    <property type="entry name" value="aa-tRNA-synth_I_CS"/>
</dbReference>
<dbReference type="InterPro" id="IPR041872">
    <property type="entry name" value="Anticodon_Met"/>
</dbReference>
<dbReference type="InterPro" id="IPR004495">
    <property type="entry name" value="Met-tRNA-synth_bsu_C"/>
</dbReference>
<dbReference type="InterPro" id="IPR023458">
    <property type="entry name" value="Met-tRNA_ligase_1"/>
</dbReference>
<dbReference type="InterPro" id="IPR014758">
    <property type="entry name" value="Met-tRNA_synth"/>
</dbReference>
<dbReference type="InterPro" id="IPR015413">
    <property type="entry name" value="Methionyl/Leucyl_tRNA_Synth"/>
</dbReference>
<dbReference type="InterPro" id="IPR033911">
    <property type="entry name" value="MetRS_core"/>
</dbReference>
<dbReference type="InterPro" id="IPR029038">
    <property type="entry name" value="MetRS_Zn"/>
</dbReference>
<dbReference type="InterPro" id="IPR012340">
    <property type="entry name" value="NA-bd_OB-fold"/>
</dbReference>
<dbReference type="InterPro" id="IPR014729">
    <property type="entry name" value="Rossmann-like_a/b/a_fold"/>
</dbReference>
<dbReference type="InterPro" id="IPR002547">
    <property type="entry name" value="tRNA-bd_dom"/>
</dbReference>
<dbReference type="InterPro" id="IPR009080">
    <property type="entry name" value="tRNAsynth_Ia_anticodon-bd"/>
</dbReference>
<dbReference type="NCBIfam" id="TIGR00398">
    <property type="entry name" value="metG"/>
    <property type="match status" value="1"/>
</dbReference>
<dbReference type="NCBIfam" id="TIGR00399">
    <property type="entry name" value="metG_C_term"/>
    <property type="match status" value="1"/>
</dbReference>
<dbReference type="NCBIfam" id="NF001100">
    <property type="entry name" value="PRK00133.1"/>
    <property type="match status" value="1"/>
</dbReference>
<dbReference type="PANTHER" id="PTHR45765">
    <property type="entry name" value="METHIONINE--TRNA LIGASE"/>
    <property type="match status" value="1"/>
</dbReference>
<dbReference type="PANTHER" id="PTHR45765:SF1">
    <property type="entry name" value="METHIONINE--TRNA LIGASE, CYTOPLASMIC"/>
    <property type="match status" value="1"/>
</dbReference>
<dbReference type="Pfam" id="PF19303">
    <property type="entry name" value="Anticodon_3"/>
    <property type="match status" value="1"/>
</dbReference>
<dbReference type="Pfam" id="PF09334">
    <property type="entry name" value="tRNA-synt_1g"/>
    <property type="match status" value="1"/>
</dbReference>
<dbReference type="Pfam" id="PF01588">
    <property type="entry name" value="tRNA_bind"/>
    <property type="match status" value="1"/>
</dbReference>
<dbReference type="PRINTS" id="PR01041">
    <property type="entry name" value="TRNASYNTHMET"/>
</dbReference>
<dbReference type="SUPFAM" id="SSF47323">
    <property type="entry name" value="Anticodon-binding domain of a subclass of class I aminoacyl-tRNA synthetases"/>
    <property type="match status" value="1"/>
</dbReference>
<dbReference type="SUPFAM" id="SSF57770">
    <property type="entry name" value="Methionyl-tRNA synthetase (MetRS), Zn-domain"/>
    <property type="match status" value="1"/>
</dbReference>
<dbReference type="SUPFAM" id="SSF50249">
    <property type="entry name" value="Nucleic acid-binding proteins"/>
    <property type="match status" value="1"/>
</dbReference>
<dbReference type="SUPFAM" id="SSF52374">
    <property type="entry name" value="Nucleotidylyl transferase"/>
    <property type="match status" value="1"/>
</dbReference>
<dbReference type="PROSITE" id="PS00178">
    <property type="entry name" value="AA_TRNA_LIGASE_I"/>
    <property type="match status" value="1"/>
</dbReference>
<dbReference type="PROSITE" id="PS50886">
    <property type="entry name" value="TRBD"/>
    <property type="match status" value="1"/>
</dbReference>
<protein>
    <recommendedName>
        <fullName evidence="1">Methionine--tRNA ligase</fullName>
        <ecNumber evidence="1">6.1.1.10</ecNumber>
    </recommendedName>
    <alternativeName>
        <fullName evidence="1">Methionyl-tRNA synthetase</fullName>
        <shortName evidence="1">MetRS</shortName>
    </alternativeName>
</protein>
<evidence type="ECO:0000255" key="1">
    <source>
        <dbReference type="HAMAP-Rule" id="MF_00098"/>
    </source>
</evidence>
<keyword id="KW-0030">Aminoacyl-tRNA synthetase</keyword>
<keyword id="KW-0067">ATP-binding</keyword>
<keyword id="KW-0963">Cytoplasm</keyword>
<keyword id="KW-0436">Ligase</keyword>
<keyword id="KW-0479">Metal-binding</keyword>
<keyword id="KW-0547">Nucleotide-binding</keyword>
<keyword id="KW-0648">Protein biosynthesis</keyword>
<keyword id="KW-0694">RNA-binding</keyword>
<keyword id="KW-0820">tRNA-binding</keyword>
<keyword id="KW-0862">Zinc</keyword>
<proteinExistence type="inferred from homology"/>
<feature type="chain" id="PRO_1000093697" description="Methionine--tRNA ligase">
    <location>
        <begin position="1"/>
        <end position="726"/>
    </location>
</feature>
<feature type="domain" description="tRNA-binding" evidence="1">
    <location>
        <begin position="562"/>
        <end position="667"/>
    </location>
</feature>
<feature type="short sequence motif" description="'HIGH' region">
    <location>
        <begin position="12"/>
        <end position="22"/>
    </location>
</feature>
<feature type="short sequence motif" description="'KMSKS' region">
    <location>
        <begin position="330"/>
        <end position="334"/>
    </location>
</feature>
<feature type="binding site" evidence="1">
    <location>
        <position position="143"/>
    </location>
    <ligand>
        <name>Zn(2+)</name>
        <dbReference type="ChEBI" id="CHEBI:29105"/>
    </ligand>
</feature>
<feature type="binding site" evidence="1">
    <location>
        <position position="146"/>
    </location>
    <ligand>
        <name>Zn(2+)</name>
        <dbReference type="ChEBI" id="CHEBI:29105"/>
    </ligand>
</feature>
<feature type="binding site" evidence="1">
    <location>
        <position position="155"/>
    </location>
    <ligand>
        <name>Zn(2+)</name>
        <dbReference type="ChEBI" id="CHEBI:29105"/>
    </ligand>
</feature>
<feature type="binding site" evidence="1">
    <location>
        <position position="158"/>
    </location>
    <ligand>
        <name>Zn(2+)</name>
        <dbReference type="ChEBI" id="CHEBI:29105"/>
    </ligand>
</feature>
<feature type="binding site" evidence="1">
    <location>
        <position position="333"/>
    </location>
    <ligand>
        <name>ATP</name>
        <dbReference type="ChEBI" id="CHEBI:30616"/>
    </ligand>
</feature>
<comment type="function">
    <text evidence="1">Is required not only for elongation of protein synthesis but also for the initiation of all mRNA translation through initiator tRNA(fMet) aminoacylation.</text>
</comment>
<comment type="catalytic activity">
    <reaction evidence="1">
        <text>tRNA(Met) + L-methionine + ATP = L-methionyl-tRNA(Met) + AMP + diphosphate</text>
        <dbReference type="Rhea" id="RHEA:13481"/>
        <dbReference type="Rhea" id="RHEA-COMP:9667"/>
        <dbReference type="Rhea" id="RHEA-COMP:9698"/>
        <dbReference type="ChEBI" id="CHEBI:30616"/>
        <dbReference type="ChEBI" id="CHEBI:33019"/>
        <dbReference type="ChEBI" id="CHEBI:57844"/>
        <dbReference type="ChEBI" id="CHEBI:78442"/>
        <dbReference type="ChEBI" id="CHEBI:78530"/>
        <dbReference type="ChEBI" id="CHEBI:456215"/>
        <dbReference type="EC" id="6.1.1.10"/>
    </reaction>
</comment>
<comment type="cofactor">
    <cofactor evidence="1">
        <name>Zn(2+)</name>
        <dbReference type="ChEBI" id="CHEBI:29105"/>
    </cofactor>
    <text evidence="1">Binds 1 zinc ion per subunit.</text>
</comment>
<comment type="subunit">
    <text evidence="1">Homodimer.</text>
</comment>
<comment type="subcellular location">
    <subcellularLocation>
        <location evidence="1">Cytoplasm</location>
    </subcellularLocation>
</comment>
<comment type="similarity">
    <text evidence="1">Belongs to the class-I aminoacyl-tRNA synthetase family. MetG type 1 subfamily.</text>
</comment>
<organism>
    <name type="scientific">Borrelia duttonii (strain Ly)</name>
    <dbReference type="NCBI Taxonomy" id="412419"/>
    <lineage>
        <taxon>Bacteria</taxon>
        <taxon>Pseudomonadati</taxon>
        <taxon>Spirochaetota</taxon>
        <taxon>Spirochaetia</taxon>
        <taxon>Spirochaetales</taxon>
        <taxon>Borreliaceae</taxon>
        <taxon>Borrelia</taxon>
    </lineage>
</organism>
<sequence>MKKKNLITAALPYVNNIPHLGNLVQVLSADAFARYSRMMGIETLYVCGTDEYGTATETKALIEKTTPEELCNKYHAIHKSIYEWFNIKFDIFGRTTNKYHKETVQDLFLKLDKNGYITEKENEQFFCQQDKMFLADRYVTGECPNCGNNTKGDQCENCSNLLVTNELLNPRCIICKNIPIIKKTKHLYIDLPKIKNELEHWIQQIDQNTNWNTNAIKITNAFLRDGLKERTITRDLKWGIPVPKKEYENKVFYVWFDAPIGYISITKEIIKDWESWWKNNEDTNLIQFIGKDNILFHTIMFPSIELGSQENWTMLNKLASSEYLNYENLKFSKSAGTGIFGNDVITTGIPSDVWRFYIYYNRPEKADFQFMWDDFMERINSELIGNFSNLINRVLTFYKKFFGDKIDKIELNENFWQIVNIKYERTINFFKQIELKAALKEILDISRIGNKIFQDKEPWKTKNSTPQTTKELLLNLIYLIRDLSILISPFMPHTSDRIRSFFGKSYEISNKFLGTNLGLTTIQSTEVLFTKIEKQLIDSLKLKYSGRTNMQDEQNKNSINLFSEQICLKTVKIKTIDRNPDAEKLFILKLDDGTPEGKQIVSSIADHYTEEELIGKHIIIVDNLKPAKFRGIRSEGMLIATEDENKNFKIIIVEDFKDNPIPGERVILESDTGKELKSPTKINIDKFLQAQIVAENGELKINGINLILEHSKEKVLSKEIPNGKIY</sequence>
<gene>
    <name evidence="1" type="primary">metG</name>
    <name type="ordered locus">BDU_589</name>
</gene>
<accession>B5RME0</accession>
<reference key="1">
    <citation type="journal article" date="2008" name="PLoS Genet.">
        <title>The genome of Borrelia recurrentis, the agent of deadly louse-borne relapsing fever, is a degraded subset of tick-borne Borrelia duttonii.</title>
        <authorList>
            <person name="Lescot M."/>
            <person name="Audic S."/>
            <person name="Robert C."/>
            <person name="Nguyen T.T."/>
            <person name="Blanc G."/>
            <person name="Cutler S.J."/>
            <person name="Wincker P."/>
            <person name="Couloux A."/>
            <person name="Claverie J.-M."/>
            <person name="Raoult D."/>
            <person name="Drancourt M."/>
        </authorList>
    </citation>
    <scope>NUCLEOTIDE SEQUENCE [LARGE SCALE GENOMIC DNA]</scope>
    <source>
        <strain>Ly</strain>
    </source>
</reference>